<comment type="function">
    <text>Somatostatin inhibits the release of somatotropin.</text>
</comment>
<comment type="subcellular location">
    <subcellularLocation>
        <location>Secreted</location>
    </subcellularLocation>
</comment>
<comment type="miscellaneous">
    <text>Somatostatin II may have a different degree of activity or a different type of target cell from somatostatin I.</text>
</comment>
<comment type="similarity">
    <text evidence="4">Belongs to the somatostatin family.</text>
</comment>
<gene>
    <name type="primary">sst2</name>
</gene>
<keyword id="KW-0165">Cleavage on pair of basic residues</keyword>
<keyword id="KW-0903">Direct protein sequencing</keyword>
<keyword id="KW-1015">Disulfide bond</keyword>
<keyword id="KW-0372">Hormone</keyword>
<keyword id="KW-0379">Hydroxylation</keyword>
<keyword id="KW-0873">Pyrrolidone carboxylic acid</keyword>
<keyword id="KW-0964">Secreted</keyword>
<keyword id="KW-0732">Signal</keyword>
<protein>
    <recommendedName>
        <fullName>Somatostatin-2</fullName>
    </recommendedName>
    <alternativeName>
        <fullName>Somatostatin II</fullName>
    </alternativeName>
    <component>
        <recommendedName>
            <fullName>[Tyr7,Gly10]-somatostatin-14</fullName>
        </recommendedName>
    </component>
    <component>
        <recommendedName>
            <fullName>[Tyr13,Gly16]-somatostatin-28</fullName>
        </recommendedName>
    </component>
</protein>
<sequence length="125" mass="14052">MQCIRCPAILALLALVLCGPSVSSQLDREQSDNQDLDLELRQHWLLERARSAGLLSQEWSKRAVEELLAQMSLPEADVQREAEDASMATGGRMNLERSVDSTNNLPPRERKAGCKNFYWKGFTSC</sequence>
<reference key="1">
    <citation type="journal article" date="1980" name="Nature">
        <title>Cloning and sequence analysis of cDNAs encoding two distinct somatostatin precursors found in the endocrine pancreas of anglerfish.</title>
        <authorList>
            <person name="Hobart P.M."/>
            <person name="Crawford R."/>
            <person name="Shen L."/>
            <person name="Pictet R."/>
            <person name="Rutter W.J."/>
        </authorList>
    </citation>
    <scope>NUCLEOTIDE SEQUENCE [MRNA]</scope>
</reference>
<reference key="2">
    <citation type="journal article" date="1985" name="Proc. Natl. Acad. Sci. U.S.A.">
        <title>Processing of an anglerfish somatostatin precursor to a hydroxylysine-containing somatostatin 28.</title>
        <authorList>
            <person name="Spiess J."/>
            <person name="Noe B.D."/>
        </authorList>
    </citation>
    <scope>PROTEIN SEQUENCE OF 98-125</scope>
    <scope>HYDROXYLATION</scope>
</reference>
<reference key="3">
    <citation type="journal article" date="1987" name="J. Biol. Chem.">
        <title>Post-translational processing of preprosomatostatin-II examined using fast atom bombardment mass spectrometry.</title>
        <authorList>
            <person name="Andrews P.C."/>
            <person name="Nichols R."/>
            <person name="Dixon J.E."/>
        </authorList>
    </citation>
    <scope>PARTIAL PROTEIN SEQUENCE</scope>
    <scope>SIGNAL SEQUENCE CLEAVAGE SITE</scope>
    <scope>PYROGLUTAMATE FORMATION AT GLN-25</scope>
    <scope>PROTEOLYTIC PROCESSING</scope>
    <scope>HYDROXYLATION AT LYS-120</scope>
    <scope>IDENTIFICATION BY MASS SPECTROMETRY</scope>
</reference>
<organism>
    <name type="scientific">Lophius americanus</name>
    <name type="common">American angler</name>
    <name type="synonym">Anglerfish</name>
    <dbReference type="NCBI Taxonomy" id="8073"/>
    <lineage>
        <taxon>Eukaryota</taxon>
        <taxon>Metazoa</taxon>
        <taxon>Chordata</taxon>
        <taxon>Craniata</taxon>
        <taxon>Vertebrata</taxon>
        <taxon>Euteleostomi</taxon>
        <taxon>Actinopterygii</taxon>
        <taxon>Neopterygii</taxon>
        <taxon>Teleostei</taxon>
        <taxon>Neoteleostei</taxon>
        <taxon>Acanthomorphata</taxon>
        <taxon>Eupercaria</taxon>
        <taxon>Lophiiformes</taxon>
        <taxon>Lophiidae</taxon>
        <taxon>Lophius</taxon>
    </lineage>
</organism>
<dbReference type="EMBL" id="V00641">
    <property type="protein sequence ID" value="CAA23987.1"/>
    <property type="molecule type" value="mRNA"/>
</dbReference>
<dbReference type="PIR" id="B93236">
    <property type="entry name" value="RIAFS2"/>
</dbReference>
<dbReference type="GO" id="GO:0005615">
    <property type="term" value="C:extracellular space"/>
    <property type="evidence" value="ECO:0007669"/>
    <property type="project" value="TreeGrafter"/>
</dbReference>
<dbReference type="GO" id="GO:0005179">
    <property type="term" value="F:hormone activity"/>
    <property type="evidence" value="ECO:0007669"/>
    <property type="project" value="UniProtKB-KW"/>
</dbReference>
<dbReference type="GO" id="GO:0030334">
    <property type="term" value="P:regulation of cell migration"/>
    <property type="evidence" value="ECO:0007669"/>
    <property type="project" value="TreeGrafter"/>
</dbReference>
<dbReference type="InterPro" id="IPR004250">
    <property type="entry name" value="Somatostatin"/>
</dbReference>
<dbReference type="InterPro" id="IPR018142">
    <property type="entry name" value="Somatostatin/Cortistatin_C"/>
</dbReference>
<dbReference type="PANTHER" id="PTHR10558">
    <property type="entry name" value="SOMATOSTATIN"/>
    <property type="match status" value="1"/>
</dbReference>
<dbReference type="PANTHER" id="PTHR10558:SF6">
    <property type="entry name" value="SOMATOSTATIN 1, TANDEM DUPLICATE 2"/>
    <property type="match status" value="1"/>
</dbReference>
<dbReference type="Pfam" id="PF03002">
    <property type="entry name" value="Somatostatin"/>
    <property type="match status" value="1"/>
</dbReference>
<dbReference type="PIRSF" id="PIRSF001814">
    <property type="entry name" value="Somatostatin"/>
    <property type="match status" value="1"/>
</dbReference>
<proteinExistence type="evidence at protein level"/>
<accession>P01170</accession>
<accession>Q91066</accession>
<name>SMS2_LOPAM</name>
<feature type="signal peptide" evidence="3">
    <location>
        <begin position="1"/>
        <end position="24"/>
    </location>
</feature>
<feature type="propeptide" id="PRO_0000033132" evidence="2">
    <location>
        <begin position="25"/>
        <end position="97"/>
    </location>
</feature>
<feature type="peptide" id="PRO_0000033133" description="[Tyr13,Gly16]-somatostatin-28">
    <location>
        <begin position="98"/>
        <end position="125"/>
    </location>
</feature>
<feature type="peptide" id="PRO_0000033134" description="[Tyr7,Gly10]-somatostatin-14">
    <location>
        <begin position="112"/>
        <end position="125"/>
    </location>
</feature>
<feature type="region of interest" description="Disordered" evidence="1">
    <location>
        <begin position="82"/>
        <end position="107"/>
    </location>
</feature>
<feature type="modified residue" description="Pyrrolidone carboxylic acid" evidence="3">
    <location>
        <position position="25"/>
    </location>
</feature>
<feature type="modified residue" description="5-hydroxylysine" evidence="3">
    <location>
        <position position="120"/>
    </location>
</feature>
<feature type="disulfide bond" evidence="3">
    <location>
        <begin position="114"/>
        <end position="125"/>
    </location>
</feature>
<feature type="sequence conflict" description="In Ref. 1." evidence="4" ref="1">
    <original>DV</original>
    <variation>TG</variation>
    <location>
        <begin position="77"/>
        <end position="78"/>
    </location>
</feature>
<feature type="sequence conflict" description="In Ref. 1; CAA23987." evidence="4" ref="1">
    <original>G</original>
    <variation>E</variation>
    <location>
        <position position="90"/>
    </location>
</feature>
<evidence type="ECO:0000256" key="1">
    <source>
        <dbReference type="SAM" id="MobiDB-lite"/>
    </source>
</evidence>
<evidence type="ECO:0000269" key="2">
    <source>
    </source>
</evidence>
<evidence type="ECO:0000269" key="3">
    <source>
    </source>
</evidence>
<evidence type="ECO:0000305" key="4"/>